<keyword id="KW-0472">Membrane</keyword>
<keyword id="KW-0602">Photosynthesis</keyword>
<keyword id="KW-0604">Photosystem II</keyword>
<keyword id="KW-0934">Plastid</keyword>
<keyword id="KW-0674">Reaction center</keyword>
<keyword id="KW-0812">Transmembrane</keyword>
<keyword id="KW-1133">Transmembrane helix</keyword>
<sequence length="40" mass="4223">MTDTTGRIPLWMIGTLAGILVISLIGIFFYGSYSGLGSSL</sequence>
<protein>
    <recommendedName>
        <fullName evidence="1">Photosystem II reaction center protein J</fullName>
        <shortName evidence="1">PSII-J</shortName>
    </recommendedName>
</protein>
<organism>
    <name type="scientific">Cuscuta gronovii</name>
    <name type="common">Common dodder</name>
    <name type="synonym">Epithymum gronovii</name>
    <dbReference type="NCBI Taxonomy" id="35886"/>
    <lineage>
        <taxon>Eukaryota</taxon>
        <taxon>Viridiplantae</taxon>
        <taxon>Streptophyta</taxon>
        <taxon>Embryophyta</taxon>
        <taxon>Tracheophyta</taxon>
        <taxon>Spermatophyta</taxon>
        <taxon>Magnoliopsida</taxon>
        <taxon>eudicotyledons</taxon>
        <taxon>Gunneridae</taxon>
        <taxon>Pentapetalae</taxon>
        <taxon>asterids</taxon>
        <taxon>lamiids</taxon>
        <taxon>Solanales</taxon>
        <taxon>Convolvulaceae</taxon>
        <taxon>Cuscuteae</taxon>
        <taxon>Cuscuta</taxon>
        <taxon>Cuscuta subgen. Grammica</taxon>
        <taxon>Cuscuta sect. Oxycarpae</taxon>
    </lineage>
</organism>
<accession>A7M911</accession>
<gene>
    <name evidence="1" type="primary">psbJ</name>
</gene>
<geneLocation type="plastid"/>
<feature type="chain" id="PRO_0000322054" description="Photosystem II reaction center protein J">
    <location>
        <begin position="1"/>
        <end position="40"/>
    </location>
</feature>
<feature type="transmembrane region" description="Helical" evidence="1">
    <location>
        <begin position="8"/>
        <end position="28"/>
    </location>
</feature>
<proteinExistence type="inferred from homology"/>
<name>PSBJ_CUSGR</name>
<comment type="function">
    <text evidence="1">One of the components of the core complex of photosystem II (PSII). PSII is a light-driven water:plastoquinone oxidoreductase that uses light energy to abstract electrons from H(2)O, generating O(2) and a proton gradient subsequently used for ATP formation. It consists of a core antenna complex that captures photons, and an electron transfer chain that converts photonic excitation into a charge separation.</text>
</comment>
<comment type="subunit">
    <text evidence="1">PSII is composed of 1 copy each of membrane proteins PsbA, PsbB, PsbC, PsbD, PsbE, PsbF, PsbH, PsbI, PsbJ, PsbK, PsbL, PsbM, PsbT, PsbX, PsbY, PsbZ, Psb30/Ycf12, at least 3 peripheral proteins of the oxygen-evolving complex and a large number of cofactors. It forms dimeric complexes.</text>
</comment>
<comment type="subcellular location">
    <subcellularLocation>
        <location evidence="1">Plastid membrane</location>
        <topology evidence="1">Single-pass membrane protein</topology>
    </subcellularLocation>
</comment>
<comment type="similarity">
    <text evidence="1">Belongs to the PsbJ family.</text>
</comment>
<comment type="caution">
    <text evidence="2">Young tissue from this organism is photosynthetic and contains some thylakoids, although the photosynthetic activity does not exceed the light compensation point.</text>
</comment>
<evidence type="ECO:0000255" key="1">
    <source>
        <dbReference type="HAMAP-Rule" id="MF_01305"/>
    </source>
</evidence>
<evidence type="ECO:0000305" key="2"/>
<dbReference type="EMBL" id="AM711639">
    <property type="protein sequence ID" value="CAM98339.1"/>
    <property type="molecule type" value="Genomic_DNA"/>
</dbReference>
<dbReference type="RefSeq" id="YP_001430053.1">
    <property type="nucleotide sequence ID" value="NC_009765.1"/>
</dbReference>
<dbReference type="SMR" id="A7M911"/>
<dbReference type="GeneID" id="5536763"/>
<dbReference type="GO" id="GO:0009539">
    <property type="term" value="C:photosystem II reaction center"/>
    <property type="evidence" value="ECO:0007669"/>
    <property type="project" value="InterPro"/>
</dbReference>
<dbReference type="GO" id="GO:0042170">
    <property type="term" value="C:plastid membrane"/>
    <property type="evidence" value="ECO:0007669"/>
    <property type="project" value="UniProtKB-SubCell"/>
</dbReference>
<dbReference type="GO" id="GO:0042651">
    <property type="term" value="C:thylakoid membrane"/>
    <property type="evidence" value="ECO:0007669"/>
    <property type="project" value="UniProtKB-UniRule"/>
</dbReference>
<dbReference type="GO" id="GO:0015979">
    <property type="term" value="P:photosynthesis"/>
    <property type="evidence" value="ECO:0007669"/>
    <property type="project" value="UniProtKB-UniRule"/>
</dbReference>
<dbReference type="Gene3D" id="6.10.250.2070">
    <property type="match status" value="1"/>
</dbReference>
<dbReference type="HAMAP" id="MF_01305">
    <property type="entry name" value="PSII_PsbJ"/>
    <property type="match status" value="1"/>
</dbReference>
<dbReference type="InterPro" id="IPR002682">
    <property type="entry name" value="PSII_PsbJ"/>
</dbReference>
<dbReference type="InterPro" id="IPR037267">
    <property type="entry name" value="PSII_PsbJ_sf"/>
</dbReference>
<dbReference type="NCBIfam" id="NF002722">
    <property type="entry name" value="PRK02565.1"/>
    <property type="match status" value="1"/>
</dbReference>
<dbReference type="PANTHER" id="PTHR34812">
    <property type="entry name" value="PHOTOSYSTEM II REACTION CENTER PROTEIN J"/>
    <property type="match status" value="1"/>
</dbReference>
<dbReference type="PANTHER" id="PTHR34812:SF3">
    <property type="entry name" value="PHOTOSYSTEM II REACTION CENTER PROTEIN J"/>
    <property type="match status" value="1"/>
</dbReference>
<dbReference type="Pfam" id="PF01788">
    <property type="entry name" value="PsbJ"/>
    <property type="match status" value="1"/>
</dbReference>
<dbReference type="SUPFAM" id="SSF161021">
    <property type="entry name" value="Photosystem II reaction center protein J, PsbJ"/>
    <property type="match status" value="1"/>
</dbReference>
<reference key="1">
    <citation type="journal article" date="2007" name="BMC Plant Biol.">
        <title>Complete DNA sequences of the plastid genomes of two parasitic flowering plant species, Cuscuta reflexa and Cuscuta gronovii.</title>
        <authorList>
            <person name="Funk H.T."/>
            <person name="Berg S."/>
            <person name="Krupinska K."/>
            <person name="Maier U.-G."/>
            <person name="Krause K."/>
        </authorList>
    </citation>
    <scope>NUCLEOTIDE SEQUENCE [LARGE SCALE GENOMIC DNA]</scope>
</reference>